<accession>Q6AB26</accession>
<reference key="1">
    <citation type="journal article" date="2004" name="Science">
        <title>The complete genome sequence of Propionibacterium acnes, a commensal of human skin.</title>
        <authorList>
            <person name="Brueggemann H."/>
            <person name="Henne A."/>
            <person name="Hoster F."/>
            <person name="Liesegang H."/>
            <person name="Wiezer A."/>
            <person name="Strittmatter A."/>
            <person name="Hujer S."/>
            <person name="Duerre P."/>
            <person name="Gottschalk G."/>
        </authorList>
    </citation>
    <scope>NUCLEOTIDE SEQUENCE [LARGE SCALE GENOMIC DNA]</scope>
    <source>
        <strain>DSM 16379 / KPA171202</strain>
    </source>
</reference>
<dbReference type="EC" id="3.5.2.9" evidence="1"/>
<dbReference type="EMBL" id="AE017283">
    <property type="protein sequence ID" value="AAT82040.1"/>
    <property type="molecule type" value="Genomic_DNA"/>
</dbReference>
<dbReference type="RefSeq" id="WP_002531206.1">
    <property type="nucleotide sequence ID" value="NZ_CP025935.1"/>
</dbReference>
<dbReference type="SMR" id="Q6AB26"/>
<dbReference type="EnsemblBacteria" id="AAT82040">
    <property type="protein sequence ID" value="AAT82040"/>
    <property type="gene ID" value="PPA0282"/>
</dbReference>
<dbReference type="KEGG" id="pac:PPA0282"/>
<dbReference type="PATRIC" id="fig|267747.3.peg.293"/>
<dbReference type="eggNOG" id="COG1540">
    <property type="taxonomic scope" value="Bacteria"/>
</dbReference>
<dbReference type="HOGENOM" id="CLU_069535_0_0_11"/>
<dbReference type="Proteomes" id="UP000000603">
    <property type="component" value="Chromosome"/>
</dbReference>
<dbReference type="GO" id="GO:0017168">
    <property type="term" value="F:5-oxoprolinase (ATP-hydrolyzing) activity"/>
    <property type="evidence" value="ECO:0007669"/>
    <property type="project" value="UniProtKB-UniRule"/>
</dbReference>
<dbReference type="GO" id="GO:0005524">
    <property type="term" value="F:ATP binding"/>
    <property type="evidence" value="ECO:0007669"/>
    <property type="project" value="UniProtKB-UniRule"/>
</dbReference>
<dbReference type="GO" id="GO:0005975">
    <property type="term" value="P:carbohydrate metabolic process"/>
    <property type="evidence" value="ECO:0007669"/>
    <property type="project" value="InterPro"/>
</dbReference>
<dbReference type="CDD" id="cd10787">
    <property type="entry name" value="LamB_YcsF_like"/>
    <property type="match status" value="1"/>
</dbReference>
<dbReference type="Gene3D" id="3.20.20.370">
    <property type="entry name" value="Glycoside hydrolase/deacetylase"/>
    <property type="match status" value="1"/>
</dbReference>
<dbReference type="HAMAP" id="MF_00691">
    <property type="entry name" value="PxpA"/>
    <property type="match status" value="1"/>
</dbReference>
<dbReference type="InterPro" id="IPR011330">
    <property type="entry name" value="Glyco_hydro/deAcase_b/a-brl"/>
</dbReference>
<dbReference type="InterPro" id="IPR005501">
    <property type="entry name" value="LamB/YcsF/PxpA-like"/>
</dbReference>
<dbReference type="NCBIfam" id="NF003814">
    <property type="entry name" value="PRK05406.1-3"/>
    <property type="match status" value="1"/>
</dbReference>
<dbReference type="NCBIfam" id="NF003816">
    <property type="entry name" value="PRK05406.1-5"/>
    <property type="match status" value="1"/>
</dbReference>
<dbReference type="PANTHER" id="PTHR30292:SF0">
    <property type="entry name" value="5-OXOPROLINASE SUBUNIT A"/>
    <property type="match status" value="1"/>
</dbReference>
<dbReference type="PANTHER" id="PTHR30292">
    <property type="entry name" value="UNCHARACTERIZED PROTEIN YBGL-RELATED"/>
    <property type="match status" value="1"/>
</dbReference>
<dbReference type="Pfam" id="PF03746">
    <property type="entry name" value="LamB_YcsF"/>
    <property type="match status" value="1"/>
</dbReference>
<dbReference type="SUPFAM" id="SSF88713">
    <property type="entry name" value="Glycoside hydrolase/deacetylase"/>
    <property type="match status" value="1"/>
</dbReference>
<sequence length="256" mass="26497">MATVDLNADMGESFGSWKAGDDESLLGIVTSANVACGFHAGDAVVMGQTCKAAAEHGVCIGAHVSYRDLAGFGRNFIDVDPGRLRDEVIYQLSALRGIAAVHGASVRYVKPHGALYNTIVHHQAQAKAVVEAIDAVNSATGADMAILGLPGALVLDLAEQQGVRTLSEVFADRAYNPDGTLVSRRQEGSVLHDPGEVAERVVTLVTQGSVTAIDGTKVPIKADSVCVHGDTPGAVAMATAVRDRLASTGIELRAAA</sequence>
<comment type="function">
    <text evidence="1">Catalyzes the cleavage of 5-oxoproline to form L-glutamate coupled to the hydrolysis of ATP to ADP and inorganic phosphate.</text>
</comment>
<comment type="catalytic activity">
    <reaction evidence="1">
        <text>5-oxo-L-proline + ATP + 2 H2O = L-glutamate + ADP + phosphate + H(+)</text>
        <dbReference type="Rhea" id="RHEA:10348"/>
        <dbReference type="ChEBI" id="CHEBI:15377"/>
        <dbReference type="ChEBI" id="CHEBI:15378"/>
        <dbReference type="ChEBI" id="CHEBI:29985"/>
        <dbReference type="ChEBI" id="CHEBI:30616"/>
        <dbReference type="ChEBI" id="CHEBI:43474"/>
        <dbReference type="ChEBI" id="CHEBI:58402"/>
        <dbReference type="ChEBI" id="CHEBI:456216"/>
        <dbReference type="EC" id="3.5.2.9"/>
    </reaction>
</comment>
<comment type="subunit">
    <text evidence="1">Forms a complex composed of PxpA, PxpB and PxpC.</text>
</comment>
<comment type="similarity">
    <text evidence="1">Belongs to the LamB/PxpA family.</text>
</comment>
<name>PXPA_CUTAK</name>
<proteinExistence type="inferred from homology"/>
<gene>
    <name evidence="1" type="primary">pxpA</name>
    <name type="ordered locus">PPA0282</name>
</gene>
<organism>
    <name type="scientific">Cutibacterium acnes (strain DSM 16379 / KPA171202)</name>
    <name type="common">Propionibacterium acnes</name>
    <dbReference type="NCBI Taxonomy" id="267747"/>
    <lineage>
        <taxon>Bacteria</taxon>
        <taxon>Bacillati</taxon>
        <taxon>Actinomycetota</taxon>
        <taxon>Actinomycetes</taxon>
        <taxon>Propionibacteriales</taxon>
        <taxon>Propionibacteriaceae</taxon>
        <taxon>Cutibacterium</taxon>
    </lineage>
</organism>
<protein>
    <recommendedName>
        <fullName evidence="1">5-oxoprolinase subunit A</fullName>
        <shortName evidence="1">5-OPase subunit A</shortName>
        <ecNumber evidence="1">3.5.2.9</ecNumber>
    </recommendedName>
    <alternativeName>
        <fullName evidence="1">5-oxoprolinase (ATP-hydrolyzing) subunit A</fullName>
    </alternativeName>
</protein>
<evidence type="ECO:0000255" key="1">
    <source>
        <dbReference type="HAMAP-Rule" id="MF_00691"/>
    </source>
</evidence>
<feature type="chain" id="PRO_0000185024" description="5-oxoprolinase subunit A">
    <location>
        <begin position="1"/>
        <end position="256"/>
    </location>
</feature>
<keyword id="KW-0067">ATP-binding</keyword>
<keyword id="KW-0378">Hydrolase</keyword>
<keyword id="KW-0547">Nucleotide-binding</keyword>